<proteinExistence type="inferred from homology"/>
<name>SYC_BUCCC</name>
<gene>
    <name evidence="1" type="primary">cysS</name>
    <name type="ordered locus">BCc_306</name>
</gene>
<dbReference type="EC" id="6.1.1.16" evidence="1"/>
<dbReference type="EMBL" id="CP000263">
    <property type="protein sequence ID" value="ABJ90763.1"/>
    <property type="molecule type" value="Genomic_DNA"/>
</dbReference>
<dbReference type="RefSeq" id="WP_011672682.1">
    <property type="nucleotide sequence ID" value="NC_008513.1"/>
</dbReference>
<dbReference type="SMR" id="Q057D6"/>
<dbReference type="STRING" id="372461.BCc_306"/>
<dbReference type="KEGG" id="bcc:BCc_306"/>
<dbReference type="eggNOG" id="COG0215">
    <property type="taxonomic scope" value="Bacteria"/>
</dbReference>
<dbReference type="HOGENOM" id="CLU_013528_0_1_6"/>
<dbReference type="OrthoDB" id="9815130at2"/>
<dbReference type="Proteomes" id="UP000000669">
    <property type="component" value="Chromosome"/>
</dbReference>
<dbReference type="GO" id="GO:0005829">
    <property type="term" value="C:cytosol"/>
    <property type="evidence" value="ECO:0007669"/>
    <property type="project" value="TreeGrafter"/>
</dbReference>
<dbReference type="GO" id="GO:0005524">
    <property type="term" value="F:ATP binding"/>
    <property type="evidence" value="ECO:0007669"/>
    <property type="project" value="UniProtKB-UniRule"/>
</dbReference>
<dbReference type="GO" id="GO:0004817">
    <property type="term" value="F:cysteine-tRNA ligase activity"/>
    <property type="evidence" value="ECO:0007669"/>
    <property type="project" value="UniProtKB-UniRule"/>
</dbReference>
<dbReference type="GO" id="GO:0008270">
    <property type="term" value="F:zinc ion binding"/>
    <property type="evidence" value="ECO:0007669"/>
    <property type="project" value="UniProtKB-UniRule"/>
</dbReference>
<dbReference type="GO" id="GO:0006423">
    <property type="term" value="P:cysteinyl-tRNA aminoacylation"/>
    <property type="evidence" value="ECO:0007669"/>
    <property type="project" value="UniProtKB-UniRule"/>
</dbReference>
<dbReference type="CDD" id="cd00672">
    <property type="entry name" value="CysRS_core"/>
    <property type="match status" value="1"/>
</dbReference>
<dbReference type="Gene3D" id="1.20.120.1910">
    <property type="entry name" value="Cysteine-tRNA ligase, C-terminal anti-codon recognition domain"/>
    <property type="match status" value="1"/>
</dbReference>
<dbReference type="Gene3D" id="3.40.50.620">
    <property type="entry name" value="HUPs"/>
    <property type="match status" value="1"/>
</dbReference>
<dbReference type="HAMAP" id="MF_00041">
    <property type="entry name" value="Cys_tRNA_synth"/>
    <property type="match status" value="1"/>
</dbReference>
<dbReference type="InterPro" id="IPR015803">
    <property type="entry name" value="Cys-tRNA-ligase"/>
</dbReference>
<dbReference type="InterPro" id="IPR015273">
    <property type="entry name" value="Cys-tRNA-synt_Ia_DALR"/>
</dbReference>
<dbReference type="InterPro" id="IPR024909">
    <property type="entry name" value="Cys-tRNA/MSH_ligase"/>
</dbReference>
<dbReference type="InterPro" id="IPR014729">
    <property type="entry name" value="Rossmann-like_a/b/a_fold"/>
</dbReference>
<dbReference type="InterPro" id="IPR032678">
    <property type="entry name" value="tRNA-synt_1_cat_dom"/>
</dbReference>
<dbReference type="InterPro" id="IPR009080">
    <property type="entry name" value="tRNAsynth_Ia_anticodon-bd"/>
</dbReference>
<dbReference type="NCBIfam" id="TIGR00435">
    <property type="entry name" value="cysS"/>
    <property type="match status" value="1"/>
</dbReference>
<dbReference type="PANTHER" id="PTHR10890:SF3">
    <property type="entry name" value="CYSTEINE--TRNA LIGASE, CYTOPLASMIC"/>
    <property type="match status" value="1"/>
</dbReference>
<dbReference type="PANTHER" id="PTHR10890">
    <property type="entry name" value="CYSTEINYL-TRNA SYNTHETASE"/>
    <property type="match status" value="1"/>
</dbReference>
<dbReference type="Pfam" id="PF09190">
    <property type="entry name" value="DALR_2"/>
    <property type="match status" value="1"/>
</dbReference>
<dbReference type="Pfam" id="PF01406">
    <property type="entry name" value="tRNA-synt_1e"/>
    <property type="match status" value="1"/>
</dbReference>
<dbReference type="PRINTS" id="PR00983">
    <property type="entry name" value="TRNASYNTHCYS"/>
</dbReference>
<dbReference type="SMART" id="SM00840">
    <property type="entry name" value="DALR_2"/>
    <property type="match status" value="1"/>
</dbReference>
<dbReference type="SUPFAM" id="SSF47323">
    <property type="entry name" value="Anticodon-binding domain of a subclass of class I aminoacyl-tRNA synthetases"/>
    <property type="match status" value="1"/>
</dbReference>
<dbReference type="SUPFAM" id="SSF52374">
    <property type="entry name" value="Nucleotidylyl transferase"/>
    <property type="match status" value="1"/>
</dbReference>
<organism>
    <name type="scientific">Buchnera aphidicola subsp. Cinara cedri (strain Cc)</name>
    <dbReference type="NCBI Taxonomy" id="372461"/>
    <lineage>
        <taxon>Bacteria</taxon>
        <taxon>Pseudomonadati</taxon>
        <taxon>Pseudomonadota</taxon>
        <taxon>Gammaproteobacteria</taxon>
        <taxon>Enterobacterales</taxon>
        <taxon>Erwiniaceae</taxon>
        <taxon>Buchnera</taxon>
    </lineage>
</organism>
<evidence type="ECO:0000255" key="1">
    <source>
        <dbReference type="HAMAP-Rule" id="MF_00041"/>
    </source>
</evidence>
<sequence>MLRIFNTLTKKKEIFDFLLNKKINIYVCGVTTYDFCHIGHARTFIIFDIIIRYLQYLGYNTFYIRNITDIDDKIINKAKINNESIHILVNRMIKLMHKDFLSLNLIKPDQEPRVTQHISNIISSIKLLLKNNYAYVSDNKDILFKLNNFKEYGFLSNRMFNCSEKNFTTISKEKNYINNINDFVLWKHSNQLSIDTCTNWSSPWGAGRPGWHIECSSIINNFFKDGVVDIHGGGIDLLFPHHENEIAQLKSMNNSFSVNFWIHSGMVINKNHKMSKSFSNSVSIQYLLKKYDSEIIRWYFLATHYRHPLYYSEKNLLMMKNIFIKIYRSLLDCVVTINTKIDYEYHLRNKIKRKFFSAMNDDFNTPKACSILQKISKLIYKNKKNNTYLANILASDLVYLGKILGLFQNDPKNFFLKDNFCNKSTDLLIIVEKLFHMRNFYRSKKQWNLSDIIRKKLFCLGVIVEDNSYSSYYRFI</sequence>
<comment type="catalytic activity">
    <reaction evidence="1">
        <text>tRNA(Cys) + L-cysteine + ATP = L-cysteinyl-tRNA(Cys) + AMP + diphosphate</text>
        <dbReference type="Rhea" id="RHEA:17773"/>
        <dbReference type="Rhea" id="RHEA-COMP:9661"/>
        <dbReference type="Rhea" id="RHEA-COMP:9679"/>
        <dbReference type="ChEBI" id="CHEBI:30616"/>
        <dbReference type="ChEBI" id="CHEBI:33019"/>
        <dbReference type="ChEBI" id="CHEBI:35235"/>
        <dbReference type="ChEBI" id="CHEBI:78442"/>
        <dbReference type="ChEBI" id="CHEBI:78517"/>
        <dbReference type="ChEBI" id="CHEBI:456215"/>
        <dbReference type="EC" id="6.1.1.16"/>
    </reaction>
</comment>
<comment type="cofactor">
    <cofactor evidence="1">
        <name>Zn(2+)</name>
        <dbReference type="ChEBI" id="CHEBI:29105"/>
    </cofactor>
    <text evidence="1">Binds 1 zinc ion per subunit.</text>
</comment>
<comment type="subunit">
    <text evidence="1">Monomer.</text>
</comment>
<comment type="subcellular location">
    <subcellularLocation>
        <location evidence="1">Cytoplasm</location>
    </subcellularLocation>
</comment>
<comment type="similarity">
    <text evidence="1">Belongs to the class-I aminoacyl-tRNA synthetase family.</text>
</comment>
<keyword id="KW-0030">Aminoacyl-tRNA synthetase</keyword>
<keyword id="KW-0067">ATP-binding</keyword>
<keyword id="KW-0963">Cytoplasm</keyword>
<keyword id="KW-0436">Ligase</keyword>
<keyword id="KW-0479">Metal-binding</keyword>
<keyword id="KW-0547">Nucleotide-binding</keyword>
<keyword id="KW-0648">Protein biosynthesis</keyword>
<keyword id="KW-1185">Reference proteome</keyword>
<keyword id="KW-0862">Zinc</keyword>
<reference key="1">
    <citation type="journal article" date="2006" name="Science">
        <title>A small microbial genome: the end of a long symbiotic relationship?</title>
        <authorList>
            <person name="Perez-Brocal V."/>
            <person name="Gil R."/>
            <person name="Ramos S."/>
            <person name="Lamelas A."/>
            <person name="Postigo M."/>
            <person name="Michelena J.M."/>
            <person name="Silva F.J."/>
            <person name="Moya A."/>
            <person name="Latorre A."/>
        </authorList>
    </citation>
    <scope>NUCLEOTIDE SEQUENCE [LARGE SCALE GENOMIC DNA]</scope>
    <source>
        <strain>Cc</strain>
    </source>
</reference>
<protein>
    <recommendedName>
        <fullName evidence="1">Cysteine--tRNA ligase</fullName>
        <ecNumber evidence="1">6.1.1.16</ecNumber>
    </recommendedName>
    <alternativeName>
        <fullName evidence="1">Cysteinyl-tRNA synthetase</fullName>
        <shortName evidence="1">CysRS</shortName>
    </alternativeName>
</protein>
<feature type="chain" id="PRO_0000332797" description="Cysteine--tRNA ligase">
    <location>
        <begin position="1"/>
        <end position="476"/>
    </location>
</feature>
<feature type="short sequence motif" description="'HIGH' region">
    <location>
        <begin position="30"/>
        <end position="40"/>
    </location>
</feature>
<feature type="short sequence motif" description="'KMSKS' region">
    <location>
        <begin position="273"/>
        <end position="277"/>
    </location>
</feature>
<feature type="binding site" evidence="1">
    <location>
        <position position="28"/>
    </location>
    <ligand>
        <name>Zn(2+)</name>
        <dbReference type="ChEBI" id="CHEBI:29105"/>
    </ligand>
</feature>
<feature type="binding site" evidence="1">
    <location>
        <position position="215"/>
    </location>
    <ligand>
        <name>Zn(2+)</name>
        <dbReference type="ChEBI" id="CHEBI:29105"/>
    </ligand>
</feature>
<feature type="binding site" evidence="1">
    <location>
        <position position="241"/>
    </location>
    <ligand>
        <name>Zn(2+)</name>
        <dbReference type="ChEBI" id="CHEBI:29105"/>
    </ligand>
</feature>
<feature type="binding site" evidence="1">
    <location>
        <position position="245"/>
    </location>
    <ligand>
        <name>Zn(2+)</name>
        <dbReference type="ChEBI" id="CHEBI:29105"/>
    </ligand>
</feature>
<feature type="binding site" evidence="1">
    <location>
        <position position="276"/>
    </location>
    <ligand>
        <name>ATP</name>
        <dbReference type="ChEBI" id="CHEBI:30616"/>
    </ligand>
</feature>
<accession>Q057D6</accession>